<gene>
    <name evidence="1" type="primary">esaB</name>
    <name type="ordered locus">SAR0282</name>
</gene>
<feature type="chain" id="PRO_0000087046" description="Type VII secretion system accessory factor EsaB">
    <location>
        <begin position="1"/>
        <end position="80"/>
    </location>
</feature>
<keyword id="KW-0963">Cytoplasm</keyword>
<keyword id="KW-0843">Virulence</keyword>
<comment type="subcellular location">
    <subcellularLocation>
        <location evidence="1">Cytoplasm</location>
    </subcellularLocation>
</comment>
<comment type="miscellaneous">
    <text evidence="2">This strain lacks esxB and esxC.</text>
</comment>
<comment type="similarity">
    <text evidence="2">Belongs to the EsaB family.</text>
</comment>
<reference key="1">
    <citation type="journal article" date="2004" name="Proc. Natl. Acad. Sci. U.S.A.">
        <title>Complete genomes of two clinical Staphylococcus aureus strains: evidence for the rapid evolution of virulence and drug resistance.</title>
        <authorList>
            <person name="Holden M.T.G."/>
            <person name="Feil E.J."/>
            <person name="Lindsay J.A."/>
            <person name="Peacock S.J."/>
            <person name="Day N.P.J."/>
            <person name="Enright M.C."/>
            <person name="Foster T.J."/>
            <person name="Moore C.E."/>
            <person name="Hurst L."/>
            <person name="Atkin R."/>
            <person name="Barron A."/>
            <person name="Bason N."/>
            <person name="Bentley S.D."/>
            <person name="Chillingworth C."/>
            <person name="Chillingworth T."/>
            <person name="Churcher C."/>
            <person name="Clark L."/>
            <person name="Corton C."/>
            <person name="Cronin A."/>
            <person name="Doggett J."/>
            <person name="Dowd L."/>
            <person name="Feltwell T."/>
            <person name="Hance Z."/>
            <person name="Harris B."/>
            <person name="Hauser H."/>
            <person name="Holroyd S."/>
            <person name="Jagels K."/>
            <person name="James K.D."/>
            <person name="Lennard N."/>
            <person name="Line A."/>
            <person name="Mayes R."/>
            <person name="Moule S."/>
            <person name="Mungall K."/>
            <person name="Ormond D."/>
            <person name="Quail M.A."/>
            <person name="Rabbinowitsch E."/>
            <person name="Rutherford K.M."/>
            <person name="Sanders M."/>
            <person name="Sharp S."/>
            <person name="Simmonds M."/>
            <person name="Stevens K."/>
            <person name="Whitehead S."/>
            <person name="Barrell B.G."/>
            <person name="Spratt B.G."/>
            <person name="Parkhill J."/>
        </authorList>
    </citation>
    <scope>NUCLEOTIDE SEQUENCE [LARGE SCALE GENOMIC DNA]</scope>
    <source>
        <strain>MRSA252</strain>
    </source>
</reference>
<evidence type="ECO:0000250" key="1">
    <source>
        <dbReference type="UniProtKB" id="P0C050"/>
    </source>
</evidence>
<evidence type="ECO:0000305" key="2"/>
<protein>
    <recommendedName>
        <fullName evidence="1">Type VII secretion system accessory factor EsaB</fullName>
    </recommendedName>
</protein>
<organism>
    <name type="scientific">Staphylococcus aureus (strain MRSA252)</name>
    <dbReference type="NCBI Taxonomy" id="282458"/>
    <lineage>
        <taxon>Bacteria</taxon>
        <taxon>Bacillati</taxon>
        <taxon>Bacillota</taxon>
        <taxon>Bacilli</taxon>
        <taxon>Bacillales</taxon>
        <taxon>Staphylococcaceae</taxon>
        <taxon>Staphylococcus</taxon>
    </lineage>
</organism>
<name>ESAB_STAAR</name>
<dbReference type="EMBL" id="BX571856">
    <property type="protein sequence ID" value="CAG39309.1"/>
    <property type="molecule type" value="Genomic_DNA"/>
</dbReference>
<dbReference type="RefSeq" id="WP_001071606.1">
    <property type="nucleotide sequence ID" value="NC_002952.2"/>
</dbReference>
<dbReference type="SMR" id="Q6GK26"/>
<dbReference type="GeneID" id="98344609"/>
<dbReference type="KEGG" id="sar:SAR0282"/>
<dbReference type="HOGENOM" id="CLU_189011_2_0_9"/>
<dbReference type="Proteomes" id="UP000000596">
    <property type="component" value="Chromosome"/>
</dbReference>
<dbReference type="GO" id="GO:0005737">
    <property type="term" value="C:cytoplasm"/>
    <property type="evidence" value="ECO:0007669"/>
    <property type="project" value="UniProtKB-SubCell"/>
</dbReference>
<dbReference type="Gene3D" id="3.10.20.90">
    <property type="entry name" value="Phosphatidylinositol 3-kinase Catalytic Subunit, Chain A, domain 1"/>
    <property type="match status" value="1"/>
</dbReference>
<dbReference type="InterPro" id="IPR014921">
    <property type="entry name" value="EsaB"/>
</dbReference>
<dbReference type="InterPro" id="IPR029071">
    <property type="entry name" value="Ubiquitin-like_domsf"/>
</dbReference>
<dbReference type="InterPro" id="IPR024962">
    <property type="entry name" value="YukD-like"/>
</dbReference>
<dbReference type="Pfam" id="PF08817">
    <property type="entry name" value="YukD"/>
    <property type="match status" value="1"/>
</dbReference>
<dbReference type="PIRSF" id="PIRSF037793">
    <property type="entry name" value="DUF_ubiquitin-like_YukD"/>
    <property type="match status" value="1"/>
</dbReference>
<dbReference type="SUPFAM" id="SSF54236">
    <property type="entry name" value="Ubiquitin-like"/>
    <property type="match status" value="1"/>
</dbReference>
<accession>Q6GK26</accession>
<proteinExistence type="inferred from homology"/>
<sequence>MNQHVKVTFDFTNYNYGTYDLAVPAYLPIKNLIALVLDSLDISIFDVNTQIKVMTKGQLLVENDRLIDYQIADGDILKLL</sequence>